<protein>
    <recommendedName>
        <fullName>HTH-type transcriptional regulator TsaR</fullName>
    </recommendedName>
</protein>
<sequence length="298" mass="32663">MKLQTLQALICIEEVGSLRAAAQLLHLSQPALSAAIQQLEDELKAPLLVRTKRGVSLTSFGQAFMKHARLIVTESRRAQEEIGQLRGRWEGHITFAASPAIALAALPLALASFAREFPDVTVNVRDGMYPAVSPQLRDGTLDFALTAAHKHDIDTDLEAQPLYVSDVVIVGQRQHPMANATRLAELQECRWAFSSAPRGPGAIIRNAFARYGLPEPKLGLVCESFLALPGVVAHSDLLTTMPRTLYERNAFKDQLCSIPLQDALPNPTIYVLRRHDLPVTPAAAGLIRWIQHHALQTG</sequence>
<evidence type="ECO:0000255" key="1">
    <source>
        <dbReference type="PROSITE-ProRule" id="PRU00253"/>
    </source>
</evidence>
<evidence type="ECO:0000269" key="2">
    <source>
    </source>
</evidence>
<evidence type="ECO:0000269" key="3">
    <source>
    </source>
</evidence>
<evidence type="ECO:0000269" key="4">
    <source>
    </source>
</evidence>
<evidence type="ECO:0000305" key="5"/>
<evidence type="ECO:0007744" key="6">
    <source>
        <dbReference type="PDB" id="3FXQ"/>
    </source>
</evidence>
<evidence type="ECO:0007744" key="7">
    <source>
        <dbReference type="PDB" id="3FXR"/>
    </source>
</evidence>
<evidence type="ECO:0007744" key="8">
    <source>
        <dbReference type="PDB" id="3FXU"/>
    </source>
</evidence>
<evidence type="ECO:0007744" key="9">
    <source>
        <dbReference type="PDB" id="3FZJ"/>
    </source>
</evidence>
<evidence type="ECO:0007829" key="10">
    <source>
        <dbReference type="PDB" id="3FXQ"/>
    </source>
</evidence>
<feature type="chain" id="PRO_0000430301" description="HTH-type transcriptional regulator TsaR">
    <location>
        <begin position="1"/>
        <end position="298"/>
    </location>
</feature>
<feature type="domain" description="HTH lysR-type" evidence="1">
    <location>
        <begin position="1"/>
        <end position="58"/>
    </location>
</feature>
<feature type="DNA-binding region" description="H-T-H motif" evidence="1">
    <location>
        <begin position="18"/>
        <end position="37"/>
    </location>
</feature>
<feature type="binding site" evidence="4 8">
    <location>
        <position position="98"/>
    </location>
    <ligand>
        <name>toluene-4-sulfonate</name>
        <dbReference type="ChEBI" id="CHEBI:27023"/>
    </ligand>
</feature>
<feature type="binding site" evidence="4 8">
    <location>
        <position position="100"/>
    </location>
    <ligand>
        <name>toluene-4-sulfonate</name>
        <dbReference type="ChEBI" id="CHEBI:27023"/>
    </ligand>
</feature>
<feature type="helix" evidence="10">
    <location>
        <begin position="2"/>
        <end position="15"/>
    </location>
</feature>
<feature type="helix" evidence="10">
    <location>
        <begin position="18"/>
        <end position="24"/>
    </location>
</feature>
<feature type="helix" evidence="10">
    <location>
        <begin position="29"/>
        <end position="43"/>
    </location>
</feature>
<feature type="strand" evidence="10">
    <location>
        <begin position="47"/>
        <end position="50"/>
    </location>
</feature>
<feature type="strand" evidence="10">
    <location>
        <begin position="52"/>
        <end position="57"/>
    </location>
</feature>
<feature type="helix" evidence="10">
    <location>
        <begin position="59"/>
        <end position="90"/>
    </location>
</feature>
<feature type="strand" evidence="10">
    <location>
        <begin position="92"/>
        <end position="97"/>
    </location>
</feature>
<feature type="helix" evidence="10">
    <location>
        <begin position="99"/>
        <end position="103"/>
    </location>
</feature>
<feature type="helix" evidence="10">
    <location>
        <begin position="105"/>
        <end position="116"/>
    </location>
</feature>
<feature type="strand" evidence="10">
    <location>
        <begin position="121"/>
        <end position="126"/>
    </location>
</feature>
<feature type="turn" evidence="10">
    <location>
        <begin position="129"/>
        <end position="132"/>
    </location>
</feature>
<feature type="helix" evidence="10">
    <location>
        <begin position="133"/>
        <end position="138"/>
    </location>
</feature>
<feature type="strand" evidence="10">
    <location>
        <begin position="139"/>
        <end position="147"/>
    </location>
</feature>
<feature type="helix" evidence="10">
    <location>
        <begin position="150"/>
        <end position="152"/>
    </location>
</feature>
<feature type="strand" evidence="10">
    <location>
        <begin position="157"/>
        <end position="164"/>
    </location>
</feature>
<feature type="strand" evidence="10">
    <location>
        <begin position="167"/>
        <end position="172"/>
    </location>
</feature>
<feature type="turn" evidence="10">
    <location>
        <begin position="176"/>
        <end position="179"/>
    </location>
</feature>
<feature type="helix" evidence="10">
    <location>
        <begin position="183"/>
        <end position="186"/>
    </location>
</feature>
<feature type="strand" evidence="10">
    <location>
        <begin position="189"/>
        <end position="194"/>
    </location>
</feature>
<feature type="helix" evidence="10">
    <location>
        <begin position="202"/>
        <end position="210"/>
    </location>
</feature>
<feature type="strand" evidence="10">
    <location>
        <begin position="217"/>
        <end position="222"/>
    </location>
</feature>
<feature type="turn" evidence="10">
    <location>
        <begin position="225"/>
        <end position="227"/>
    </location>
</feature>
<feature type="helix" evidence="10">
    <location>
        <begin position="228"/>
        <end position="233"/>
    </location>
</feature>
<feature type="strand" evidence="10">
    <location>
        <begin position="238"/>
        <end position="242"/>
    </location>
</feature>
<feature type="helix" evidence="10">
    <location>
        <begin position="243"/>
        <end position="247"/>
    </location>
</feature>
<feature type="helix" evidence="10">
    <location>
        <begin position="252"/>
        <end position="254"/>
    </location>
</feature>
<feature type="strand" evidence="10">
    <location>
        <begin position="255"/>
        <end position="257"/>
    </location>
</feature>
<feature type="strand" evidence="10">
    <location>
        <begin position="268"/>
        <end position="274"/>
    </location>
</feature>
<feature type="helix" evidence="10">
    <location>
        <begin position="281"/>
        <end position="293"/>
    </location>
</feature>
<keyword id="KW-0002">3D-structure</keyword>
<keyword id="KW-0238">DNA-binding</keyword>
<keyword id="KW-0614">Plasmid</keyword>
<keyword id="KW-0804">Transcription</keyword>
<keyword id="KW-0805">Transcription regulation</keyword>
<accession>P94678</accession>
<dbReference type="EMBL" id="AH010657">
    <property type="protein sequence ID" value="AAC44806.1"/>
    <property type="molecule type" value="Genomic_DNA"/>
</dbReference>
<dbReference type="PDB" id="3FXQ">
    <property type="method" value="X-ray"/>
    <property type="resolution" value="1.85 A"/>
    <property type="chains" value="A/B=1-298"/>
</dbReference>
<dbReference type="PDB" id="3FXR">
    <property type="method" value="X-ray"/>
    <property type="resolution" value="2.50 A"/>
    <property type="chains" value="A/B=1-298"/>
</dbReference>
<dbReference type="PDB" id="3FXU">
    <property type="method" value="X-ray"/>
    <property type="resolution" value="1.95 A"/>
    <property type="chains" value="A/B=1-298"/>
</dbReference>
<dbReference type="PDB" id="3FZJ">
    <property type="method" value="X-ray"/>
    <property type="resolution" value="7.10 A"/>
    <property type="chains" value="A/B/C/D/E/F/G/H/I/J=1-298"/>
</dbReference>
<dbReference type="PDB" id="3N6T">
    <property type="method" value="X-ray"/>
    <property type="resolution" value="1.85 A"/>
    <property type="chains" value="A=91-295"/>
</dbReference>
<dbReference type="PDB" id="3N6U">
    <property type="method" value="X-ray"/>
    <property type="resolution" value="1.87 A"/>
    <property type="chains" value="A=91-295"/>
</dbReference>
<dbReference type="PDBsum" id="3FXQ"/>
<dbReference type="PDBsum" id="3FXR"/>
<dbReference type="PDBsum" id="3FXU"/>
<dbReference type="PDBsum" id="3FZJ"/>
<dbReference type="PDBsum" id="3N6T"/>
<dbReference type="PDBsum" id="3N6U"/>
<dbReference type="SMR" id="P94678"/>
<dbReference type="EvolutionaryTrace" id="P94678"/>
<dbReference type="GO" id="GO:0005829">
    <property type="term" value="C:cytosol"/>
    <property type="evidence" value="ECO:0007669"/>
    <property type="project" value="TreeGrafter"/>
</dbReference>
<dbReference type="GO" id="GO:0003677">
    <property type="term" value="F:DNA binding"/>
    <property type="evidence" value="ECO:0007669"/>
    <property type="project" value="UniProtKB-KW"/>
</dbReference>
<dbReference type="GO" id="GO:0003700">
    <property type="term" value="F:DNA-binding transcription factor activity"/>
    <property type="evidence" value="ECO:0007669"/>
    <property type="project" value="InterPro"/>
</dbReference>
<dbReference type="FunFam" id="1.10.10.10:FF:000001">
    <property type="entry name" value="LysR family transcriptional regulator"/>
    <property type="match status" value="1"/>
</dbReference>
<dbReference type="Gene3D" id="3.40.190.10">
    <property type="entry name" value="Periplasmic binding protein-like II"/>
    <property type="match status" value="2"/>
</dbReference>
<dbReference type="Gene3D" id="1.10.10.10">
    <property type="entry name" value="Winged helix-like DNA-binding domain superfamily/Winged helix DNA-binding domain"/>
    <property type="match status" value="1"/>
</dbReference>
<dbReference type="InterPro" id="IPR050950">
    <property type="entry name" value="HTH-type_LysR_regulators"/>
</dbReference>
<dbReference type="InterPro" id="IPR005119">
    <property type="entry name" value="LysR_subst-bd"/>
</dbReference>
<dbReference type="InterPro" id="IPR000847">
    <property type="entry name" value="Tscrpt_reg_HTH_LysR"/>
</dbReference>
<dbReference type="InterPro" id="IPR036388">
    <property type="entry name" value="WH-like_DNA-bd_sf"/>
</dbReference>
<dbReference type="InterPro" id="IPR036390">
    <property type="entry name" value="WH_DNA-bd_sf"/>
</dbReference>
<dbReference type="PANTHER" id="PTHR30419">
    <property type="entry name" value="HTH-TYPE TRANSCRIPTIONAL REGULATOR YBHD"/>
    <property type="match status" value="1"/>
</dbReference>
<dbReference type="PANTHER" id="PTHR30419:SF30">
    <property type="entry name" value="LYSR FAMILY TRANSCRIPTIONAL REGULATOR"/>
    <property type="match status" value="1"/>
</dbReference>
<dbReference type="Pfam" id="PF00126">
    <property type="entry name" value="HTH_1"/>
    <property type="match status" value="1"/>
</dbReference>
<dbReference type="Pfam" id="PF03466">
    <property type="entry name" value="LysR_substrate"/>
    <property type="match status" value="1"/>
</dbReference>
<dbReference type="PRINTS" id="PR00039">
    <property type="entry name" value="HTHLYSR"/>
</dbReference>
<dbReference type="SUPFAM" id="SSF53850">
    <property type="entry name" value="Periplasmic binding protein-like II"/>
    <property type="match status" value="1"/>
</dbReference>
<dbReference type="SUPFAM" id="SSF46785">
    <property type="entry name" value="Winged helix' DNA-binding domain"/>
    <property type="match status" value="1"/>
</dbReference>
<dbReference type="PROSITE" id="PS50931">
    <property type="entry name" value="HTH_LYSR"/>
    <property type="match status" value="1"/>
</dbReference>
<reference key="1">
    <citation type="journal article" date="1997" name="J. Bacteriol.">
        <title>Characterization of the p-toluenesulfonate operon tsaMBCD and tsaR in Comamonas testosteroni T-2.</title>
        <authorList>
            <person name="Junker F."/>
            <person name="Kiewitz R."/>
            <person name="Cook A.M."/>
        </authorList>
    </citation>
    <scope>NUCLEOTIDE SEQUENCE [GENOMIC DNA]</scope>
    <source>
        <strain>DSM 6577 / T-2</strain>
    </source>
</reference>
<reference key="2">
    <citation type="journal article" date="2001" name="Appl. Environ. Microbiol.">
        <title>Map of the IncP1beta plasmid pTSA encoding the widespread genes (tsa) for p-toluenesulfonate degradation in Comamonas testosteroni T-2.</title>
        <authorList>
            <person name="Tralau T."/>
            <person name="Cook A.M."/>
            <person name="Ruff J."/>
        </authorList>
    </citation>
    <scope>NUCLEOTIDE SEQUENCE [GENOMIC DNA]</scope>
    <source>
        <strain>DSM 6577 / T-2</strain>
    </source>
</reference>
<reference key="3">
    <citation type="journal article" date="2003" name="Appl. Environ. Microbiol.">
        <title>Characterization of TsaR, an oxygen-sensitive LysR-type regulator for the degradation of p-toluenesulfonate in Comamonas testosteroni T-2.</title>
        <authorList>
            <person name="Tralau T."/>
            <person name="Mampel J."/>
            <person name="Cook A.M."/>
            <person name="Ruff J."/>
        </authorList>
    </citation>
    <scope>FUNCTION</scope>
    <scope>DNA-BINDING</scope>
    <scope>ACTIVITY REGULATION</scope>
    <source>
        <strain>DSM 6577 / T-2</strain>
    </source>
</reference>
<reference key="4">
    <citation type="journal article" date="2003" name="Arch. Microbiol.">
        <title>An additional regulator, TsaQ, is involved with TsaR in regulation of transport during the degradation of p-toluenesulfonate in Comamonas testosteroni T-2.</title>
        <authorList>
            <person name="Tralau T."/>
            <person name="Cook A.M."/>
            <person name="Ruff J."/>
        </authorList>
    </citation>
    <scope>FUNCTION</scope>
    <source>
        <strain>DSM 6577 / T-2</strain>
    </source>
</reference>
<reference key="5">
    <citation type="journal article" date="2008" name="Acta Crystallogr. F">
        <title>High crystallizability under air-exclusion conditions of the full-length LysR-type transcriptional regulator TsaR from Comamonas testosteroni T-2 and data-set analysis for a MIRAS structure-solution approach.</title>
        <authorList>
            <person name="Monferrer D."/>
            <person name="Tralau T."/>
            <person name="Kertesz M.A."/>
            <person name="Panjikar S."/>
            <person name="Uson I."/>
        </authorList>
    </citation>
    <scope>CRYSTALLIZATION</scope>
    <source>
        <strain>DSM 6577 / T-2</strain>
    </source>
</reference>
<reference evidence="6 7 8 9" key="6">
    <citation type="journal article" date="2010" name="Mol. Microbiol.">
        <title>Structural studies on the full-length LysR-type regulator TsaR from Comamonas testosteroni T-2 reveal a novel open conformation of the tetrameric LTTR fold.</title>
        <authorList>
            <person name="Monferrer D."/>
            <person name="Tralau T."/>
            <person name="Kertesz M.A."/>
            <person name="Dix I."/>
            <person name="Sola M."/>
            <person name="Uson I."/>
        </authorList>
    </citation>
    <scope>X-RAY CRYSTALLOGRAPHY (1.85 ANGSTROMS) OF FREE PROTEIN AND COMPLEX WITH TOLUENE-4-SULFONATE</scope>
    <scope>H-T-H MOTIF</scope>
    <scope>DNA-BINDING</scope>
    <scope>SUBUNIT</scope>
    <source>
        <strain>DSM 6577 / T-2</strain>
    </source>
</reference>
<organism>
    <name type="scientific">Comamonas testosteroni</name>
    <name type="common">Pseudomonas testosteroni</name>
    <dbReference type="NCBI Taxonomy" id="285"/>
    <lineage>
        <taxon>Bacteria</taxon>
        <taxon>Pseudomonadati</taxon>
        <taxon>Pseudomonadota</taxon>
        <taxon>Betaproteobacteria</taxon>
        <taxon>Burkholderiales</taxon>
        <taxon>Comamonadaceae</taxon>
        <taxon>Comamonas</taxon>
    </lineage>
</organism>
<geneLocation type="plasmid">
    <name>pTSA</name>
</geneLocation>
<comment type="function">
    <text evidence="2 3">Regulates expression of the tsaMBCD1 operon and of tsaT in response to p-toluenesulfonate (TSA). Acts by binding directly to the promoter region. Binding to the tsa promoter depends on TSA concentration.</text>
</comment>
<comment type="activity regulation">
    <text evidence="2">Sensitive to oxygen.</text>
</comment>
<comment type="subunit">
    <text evidence="4">Homotetramer. Dimer of dimers related by a twofold axis.</text>
</comment>
<comment type="similarity">
    <text evidence="5">Belongs to the LysR transcriptional regulatory family.</text>
</comment>
<gene>
    <name type="primary">tsaR</name>
</gene>
<proteinExistence type="evidence at protein level"/>
<name>TSAR_COMTE</name>